<proteinExistence type="evidence at transcript level"/>
<dbReference type="EMBL" id="L27435">
    <property type="protein sequence ID" value="AAA74993.1"/>
    <property type="molecule type" value="mRNA"/>
</dbReference>
<dbReference type="PIR" id="A53453">
    <property type="entry name" value="A53453"/>
</dbReference>
<dbReference type="RefSeq" id="XP_005918754.1">
    <property type="nucleotide sequence ID" value="XM_005918692.1"/>
</dbReference>
<dbReference type="Proteomes" id="UP000264840">
    <property type="component" value="Whole Genome Shotgun Assembly"/>
</dbReference>
<dbReference type="GO" id="GO:0005615">
    <property type="term" value="C:extracellular space"/>
    <property type="evidence" value="ECO:0000250"/>
    <property type="project" value="UniProtKB"/>
</dbReference>
<dbReference type="GO" id="GO:0005183">
    <property type="term" value="F:gonadotropin hormone-releasing hormone activity"/>
    <property type="evidence" value="ECO:0007669"/>
    <property type="project" value="TreeGrafter"/>
</dbReference>
<dbReference type="GO" id="GO:0031530">
    <property type="term" value="F:gonadotropin-releasing hormone receptor binding"/>
    <property type="evidence" value="ECO:0007669"/>
    <property type="project" value="TreeGrafter"/>
</dbReference>
<dbReference type="InterPro" id="IPR002012">
    <property type="entry name" value="GnRH"/>
</dbReference>
<dbReference type="InterPro" id="IPR019792">
    <property type="entry name" value="Gonadoliberin"/>
</dbReference>
<dbReference type="PANTHER" id="PTHR10522">
    <property type="entry name" value="GONADOLIBERIN"/>
    <property type="match status" value="1"/>
</dbReference>
<dbReference type="PANTHER" id="PTHR10522:SF8">
    <property type="entry name" value="PROGONADOLIBERIN"/>
    <property type="match status" value="1"/>
</dbReference>
<dbReference type="Pfam" id="PF00446">
    <property type="entry name" value="GnRH"/>
    <property type="match status" value="1"/>
</dbReference>
<dbReference type="PROSITE" id="PS00473">
    <property type="entry name" value="GNRH"/>
    <property type="match status" value="1"/>
</dbReference>
<evidence type="ECO:0000250" key="1">
    <source>
        <dbReference type="UniProtKB" id="P51918"/>
    </source>
</evidence>
<evidence type="ECO:0000255" key="2"/>
<evidence type="ECO:0000305" key="3"/>
<organism>
    <name type="scientific">Haplochromis burtoni</name>
    <name type="common">Burton's mouthbrooder</name>
    <name type="synonym">Chromis burtoni</name>
    <dbReference type="NCBI Taxonomy" id="8153"/>
    <lineage>
        <taxon>Eukaryota</taxon>
        <taxon>Metazoa</taxon>
        <taxon>Chordata</taxon>
        <taxon>Craniata</taxon>
        <taxon>Vertebrata</taxon>
        <taxon>Euteleostomi</taxon>
        <taxon>Actinopterygii</taxon>
        <taxon>Neopterygii</taxon>
        <taxon>Teleostei</taxon>
        <taxon>Neoteleostei</taxon>
        <taxon>Acanthomorphata</taxon>
        <taxon>Ovalentaria</taxon>
        <taxon>Cichlomorphae</taxon>
        <taxon>Cichliformes</taxon>
        <taxon>Cichlidae</taxon>
        <taxon>African cichlids</taxon>
        <taxon>Pseudocrenilabrinae</taxon>
        <taxon>Haplochromini</taxon>
        <taxon>Haplochromis</taxon>
    </lineage>
</organism>
<protein>
    <recommendedName>
        <fullName>Progonadoliberin-2</fullName>
    </recommendedName>
    <alternativeName>
        <fullName>Progonadoliberin II</fullName>
    </alternativeName>
    <component>
        <recommendedName>
            <fullName>Gonadoliberin-2</fullName>
        </recommendedName>
        <alternativeName>
            <fullName>Gonadoliberin II</fullName>
        </alternativeName>
        <alternativeName>
            <fullName>Gonadotropin-releasing hormone II</fullName>
            <shortName>GnRH-II</shortName>
        </alternativeName>
        <alternativeName>
            <fullName>Luliberin II</fullName>
        </alternativeName>
        <alternativeName>
            <fullName>Luteinizing hormone-releasing hormone II</fullName>
            <shortName>LH-RH II</shortName>
        </alternativeName>
    </component>
    <component>
        <recommendedName>
            <fullName>GnRH-associated peptide 2-1</fullName>
        </recommendedName>
        <alternativeName>
            <fullName>GnRH-associated peptide II-1</fullName>
        </alternativeName>
    </component>
    <component>
        <recommendedName>
            <fullName>GnRH-associated peptide 2-2</fullName>
        </recommendedName>
        <alternativeName>
            <fullName>GnRH-associated peptide II-2</fullName>
        </alternativeName>
    </component>
</protein>
<feature type="signal peptide">
    <location>
        <begin position="1"/>
        <end position="23"/>
    </location>
</feature>
<feature type="chain" id="PRO_0000012480" description="Progonadoliberin-2">
    <location>
        <begin position="24"/>
        <end position="85"/>
    </location>
</feature>
<feature type="peptide" id="PRO_0000012481" description="Gonadoliberin-2">
    <location>
        <begin position="24"/>
        <end position="33"/>
    </location>
</feature>
<feature type="peptide" id="PRO_0000012482" description="GnRH-associated peptide 2-1" evidence="2">
    <location>
        <begin position="37"/>
        <end position="64"/>
    </location>
</feature>
<feature type="peptide" id="PRO_0000012483" description="GnRH-associated peptide 2-2" evidence="2">
    <location>
        <begin position="67"/>
        <end position="85"/>
    </location>
</feature>
<feature type="modified residue" description="Pyrrolidone carboxylic acid" evidence="1">
    <location>
        <position position="24"/>
    </location>
</feature>
<feature type="modified residue" description="Glycine amide" evidence="1">
    <location>
        <position position="33"/>
    </location>
</feature>
<comment type="function">
    <text>Stimulates the secretion of gonadotropins.</text>
</comment>
<comment type="subcellular location">
    <subcellularLocation>
        <location>Secreted</location>
    </subcellularLocation>
</comment>
<comment type="tissue specificity">
    <text>Expressed in only one cell group in the mesencephalon.</text>
</comment>
<comment type="similarity">
    <text evidence="3">Belongs to the GnRH family.</text>
</comment>
<reference key="1">
    <citation type="journal article" date="1994" name="Proc. Natl. Acad. Sci. U.S.A.">
        <title>A second gene for gonadotropin-releasing hormone: cDNA and expression pattern in the brain.</title>
        <authorList>
            <person name="White S.A."/>
            <person name="Bond C.T."/>
            <person name="Francis R.C."/>
            <person name="Kasten T.L."/>
            <person name="Fernald R.D."/>
            <person name="Adelman J.P."/>
        </authorList>
    </citation>
    <scope>NUCLEOTIDE SEQUENCE [MRNA]</scope>
    <source>
        <tissue>Brain</tissue>
    </source>
</reference>
<reference key="2">
    <citation type="journal article" date="1998" name="Gen. Comp. Endocrinol.">
        <title>Genomic structure and expression sites of three gonadotropin-releasing hormone genes in one species.</title>
        <authorList>
            <person name="White R.B."/>
            <person name="Fernald R.D."/>
        </authorList>
    </citation>
    <scope>NUCLEOTIDE SEQUENCE [GENOMIC DNA]</scope>
</reference>
<gene>
    <name type="primary">gnrh2</name>
</gene>
<accession>P37044</accession>
<accession>P20408</accession>
<sequence>MCVSRLALLLGLLLCVGAQLSFAQHWSHGWYPGGKRELDSFGTSEISEEIKLCEAGECSYLRPQRRSILRNILLDALARELQKRK</sequence>
<name>GON2_HAPBU</name>
<keyword id="KW-0027">Amidation</keyword>
<keyword id="KW-0165">Cleavage on pair of basic residues</keyword>
<keyword id="KW-0372">Hormone</keyword>
<keyword id="KW-0873">Pyrrolidone carboxylic acid</keyword>
<keyword id="KW-1185">Reference proteome</keyword>
<keyword id="KW-0964">Secreted</keyword>
<keyword id="KW-0732">Signal</keyword>